<name>DER_LEPCP</name>
<accession>B1XXK9</accession>
<evidence type="ECO:0000255" key="1">
    <source>
        <dbReference type="HAMAP-Rule" id="MF_00195"/>
    </source>
</evidence>
<reference key="1">
    <citation type="submission" date="2008-03" db="EMBL/GenBank/DDBJ databases">
        <title>Complete sequence of Leptothrix cholodnii SP-6.</title>
        <authorList>
            <consortium name="US DOE Joint Genome Institute"/>
            <person name="Copeland A."/>
            <person name="Lucas S."/>
            <person name="Lapidus A."/>
            <person name="Glavina del Rio T."/>
            <person name="Dalin E."/>
            <person name="Tice H."/>
            <person name="Bruce D."/>
            <person name="Goodwin L."/>
            <person name="Pitluck S."/>
            <person name="Chertkov O."/>
            <person name="Brettin T."/>
            <person name="Detter J.C."/>
            <person name="Han C."/>
            <person name="Kuske C.R."/>
            <person name="Schmutz J."/>
            <person name="Larimer F."/>
            <person name="Land M."/>
            <person name="Hauser L."/>
            <person name="Kyrpides N."/>
            <person name="Lykidis A."/>
            <person name="Emerson D."/>
            <person name="Richardson P."/>
        </authorList>
    </citation>
    <scope>NUCLEOTIDE SEQUENCE [LARGE SCALE GENOMIC DNA]</scope>
    <source>
        <strain>ATCC 51168 / LMG 8142 / SP-6</strain>
    </source>
</reference>
<sequence length="448" mass="49601">MKPVIAIVGRPNVGKSTLFNRLTGRRDAIVADFAGLTRDRHYGDGKLDNHEFIVIDTGGFEPDSTSGIYKEMAKQTRQAVAEADAVVFVVDVRAGLSAQDHDIARYLRATGKRVLLAANKAEGMKDGPQLAEFYELGMGEPLAVSSAHGQGVRSLIEMALEGIEPPEPEEGYSEEELRNRPTRLAVAGRPNVGKSTLINTWLGEERLVAFDLPGTTRDAIHVPFERGDKKYELIDTAGLRRKGKVFESIEKFSVVKTLQAISDANVVLLLIDATEGVSDQDAHIAGYVLDAGRAVVIAINKWDAIDSYQRETLQRSIEQRLAFLKFAPVLMISAKKRQGLGPLWKAIDDAWASATRKLPTPQLTRLLLEAVEYQQPKRAGAVRPKLRYAHQGGQNPPIIVIHGNAVEHVTEVYKRYLEARFREHFKLVGTPMRIELRASHNPFVSKDS</sequence>
<protein>
    <recommendedName>
        <fullName evidence="1">GTPase Der</fullName>
    </recommendedName>
    <alternativeName>
        <fullName evidence="1">GTP-binding protein EngA</fullName>
    </alternativeName>
</protein>
<gene>
    <name evidence="1" type="primary">der</name>
    <name type="synonym">engA</name>
    <name type="ordered locus">Lcho_2864</name>
</gene>
<proteinExistence type="inferred from homology"/>
<comment type="function">
    <text evidence="1">GTPase that plays an essential role in the late steps of ribosome biogenesis.</text>
</comment>
<comment type="subunit">
    <text evidence="1">Associates with the 50S ribosomal subunit.</text>
</comment>
<comment type="similarity">
    <text evidence="1">Belongs to the TRAFAC class TrmE-Era-EngA-EngB-Septin-like GTPase superfamily. EngA (Der) GTPase family.</text>
</comment>
<keyword id="KW-0342">GTP-binding</keyword>
<keyword id="KW-0547">Nucleotide-binding</keyword>
<keyword id="KW-1185">Reference proteome</keyword>
<keyword id="KW-0677">Repeat</keyword>
<keyword id="KW-0690">Ribosome biogenesis</keyword>
<feature type="chain" id="PRO_1000099137" description="GTPase Der">
    <location>
        <begin position="1"/>
        <end position="448"/>
    </location>
</feature>
<feature type="domain" description="EngA-type G 1">
    <location>
        <begin position="3"/>
        <end position="167"/>
    </location>
</feature>
<feature type="domain" description="EngA-type G 2">
    <location>
        <begin position="182"/>
        <end position="355"/>
    </location>
</feature>
<feature type="domain" description="KH-like" evidence="1">
    <location>
        <begin position="356"/>
        <end position="440"/>
    </location>
</feature>
<feature type="binding site" evidence="1">
    <location>
        <begin position="9"/>
        <end position="16"/>
    </location>
    <ligand>
        <name>GTP</name>
        <dbReference type="ChEBI" id="CHEBI:37565"/>
        <label>1</label>
    </ligand>
</feature>
<feature type="binding site" evidence="1">
    <location>
        <begin position="56"/>
        <end position="60"/>
    </location>
    <ligand>
        <name>GTP</name>
        <dbReference type="ChEBI" id="CHEBI:37565"/>
        <label>1</label>
    </ligand>
</feature>
<feature type="binding site" evidence="1">
    <location>
        <begin position="119"/>
        <end position="122"/>
    </location>
    <ligand>
        <name>GTP</name>
        <dbReference type="ChEBI" id="CHEBI:37565"/>
        <label>1</label>
    </ligand>
</feature>
<feature type="binding site" evidence="1">
    <location>
        <begin position="188"/>
        <end position="195"/>
    </location>
    <ligand>
        <name>GTP</name>
        <dbReference type="ChEBI" id="CHEBI:37565"/>
        <label>2</label>
    </ligand>
</feature>
<feature type="binding site" evidence="1">
    <location>
        <begin position="235"/>
        <end position="239"/>
    </location>
    <ligand>
        <name>GTP</name>
        <dbReference type="ChEBI" id="CHEBI:37565"/>
        <label>2</label>
    </ligand>
</feature>
<feature type="binding site" evidence="1">
    <location>
        <begin position="300"/>
        <end position="303"/>
    </location>
    <ligand>
        <name>GTP</name>
        <dbReference type="ChEBI" id="CHEBI:37565"/>
        <label>2</label>
    </ligand>
</feature>
<dbReference type="EMBL" id="CP001013">
    <property type="protein sequence ID" value="ACB35129.1"/>
    <property type="molecule type" value="Genomic_DNA"/>
</dbReference>
<dbReference type="RefSeq" id="WP_012347883.1">
    <property type="nucleotide sequence ID" value="NC_010524.1"/>
</dbReference>
<dbReference type="SMR" id="B1XXK9"/>
<dbReference type="STRING" id="395495.Lcho_2864"/>
<dbReference type="KEGG" id="lch:Lcho_2864"/>
<dbReference type="eggNOG" id="COG1160">
    <property type="taxonomic scope" value="Bacteria"/>
</dbReference>
<dbReference type="HOGENOM" id="CLU_016077_6_2_4"/>
<dbReference type="OrthoDB" id="9805918at2"/>
<dbReference type="Proteomes" id="UP000001693">
    <property type="component" value="Chromosome"/>
</dbReference>
<dbReference type="GO" id="GO:0016887">
    <property type="term" value="F:ATP hydrolysis activity"/>
    <property type="evidence" value="ECO:0007669"/>
    <property type="project" value="InterPro"/>
</dbReference>
<dbReference type="GO" id="GO:0005525">
    <property type="term" value="F:GTP binding"/>
    <property type="evidence" value="ECO:0007669"/>
    <property type="project" value="UniProtKB-UniRule"/>
</dbReference>
<dbReference type="GO" id="GO:0043022">
    <property type="term" value="F:ribosome binding"/>
    <property type="evidence" value="ECO:0007669"/>
    <property type="project" value="TreeGrafter"/>
</dbReference>
<dbReference type="GO" id="GO:0042254">
    <property type="term" value="P:ribosome biogenesis"/>
    <property type="evidence" value="ECO:0007669"/>
    <property type="project" value="UniProtKB-KW"/>
</dbReference>
<dbReference type="CDD" id="cd01894">
    <property type="entry name" value="EngA1"/>
    <property type="match status" value="1"/>
</dbReference>
<dbReference type="CDD" id="cd01895">
    <property type="entry name" value="EngA2"/>
    <property type="match status" value="1"/>
</dbReference>
<dbReference type="FunFam" id="3.30.300.20:FF:000004">
    <property type="entry name" value="GTPase Der"/>
    <property type="match status" value="1"/>
</dbReference>
<dbReference type="FunFam" id="3.40.50.300:FF:000040">
    <property type="entry name" value="GTPase Der"/>
    <property type="match status" value="1"/>
</dbReference>
<dbReference type="FunFam" id="3.40.50.300:FF:000057">
    <property type="entry name" value="GTPase Der"/>
    <property type="match status" value="1"/>
</dbReference>
<dbReference type="Gene3D" id="3.30.300.20">
    <property type="match status" value="1"/>
</dbReference>
<dbReference type="Gene3D" id="3.40.50.300">
    <property type="entry name" value="P-loop containing nucleotide triphosphate hydrolases"/>
    <property type="match status" value="2"/>
</dbReference>
<dbReference type="HAMAP" id="MF_00195">
    <property type="entry name" value="GTPase_Der"/>
    <property type="match status" value="1"/>
</dbReference>
<dbReference type="InterPro" id="IPR003593">
    <property type="entry name" value="AAA+_ATPase"/>
</dbReference>
<dbReference type="InterPro" id="IPR031166">
    <property type="entry name" value="G_ENGA"/>
</dbReference>
<dbReference type="InterPro" id="IPR006073">
    <property type="entry name" value="GTP-bd"/>
</dbReference>
<dbReference type="InterPro" id="IPR016484">
    <property type="entry name" value="GTPase_Der"/>
</dbReference>
<dbReference type="InterPro" id="IPR032859">
    <property type="entry name" value="KH_dom-like"/>
</dbReference>
<dbReference type="InterPro" id="IPR015946">
    <property type="entry name" value="KH_dom-like_a/b"/>
</dbReference>
<dbReference type="InterPro" id="IPR027417">
    <property type="entry name" value="P-loop_NTPase"/>
</dbReference>
<dbReference type="InterPro" id="IPR005225">
    <property type="entry name" value="Small_GTP-bd"/>
</dbReference>
<dbReference type="NCBIfam" id="TIGR03594">
    <property type="entry name" value="GTPase_EngA"/>
    <property type="match status" value="1"/>
</dbReference>
<dbReference type="NCBIfam" id="TIGR00231">
    <property type="entry name" value="small_GTP"/>
    <property type="match status" value="2"/>
</dbReference>
<dbReference type="PANTHER" id="PTHR43834">
    <property type="entry name" value="GTPASE DER"/>
    <property type="match status" value="1"/>
</dbReference>
<dbReference type="PANTHER" id="PTHR43834:SF6">
    <property type="entry name" value="GTPASE DER"/>
    <property type="match status" value="1"/>
</dbReference>
<dbReference type="Pfam" id="PF14714">
    <property type="entry name" value="KH_dom-like"/>
    <property type="match status" value="1"/>
</dbReference>
<dbReference type="Pfam" id="PF01926">
    <property type="entry name" value="MMR_HSR1"/>
    <property type="match status" value="2"/>
</dbReference>
<dbReference type="PIRSF" id="PIRSF006485">
    <property type="entry name" value="GTP-binding_EngA"/>
    <property type="match status" value="1"/>
</dbReference>
<dbReference type="PRINTS" id="PR00326">
    <property type="entry name" value="GTP1OBG"/>
</dbReference>
<dbReference type="SMART" id="SM00382">
    <property type="entry name" value="AAA"/>
    <property type="match status" value="2"/>
</dbReference>
<dbReference type="SUPFAM" id="SSF52540">
    <property type="entry name" value="P-loop containing nucleoside triphosphate hydrolases"/>
    <property type="match status" value="2"/>
</dbReference>
<dbReference type="PROSITE" id="PS51712">
    <property type="entry name" value="G_ENGA"/>
    <property type="match status" value="2"/>
</dbReference>
<organism>
    <name type="scientific">Leptothrix cholodnii (strain ATCC 51168 / LMG 8142 / SP-6)</name>
    <name type="common">Leptothrix discophora (strain SP-6)</name>
    <dbReference type="NCBI Taxonomy" id="395495"/>
    <lineage>
        <taxon>Bacteria</taxon>
        <taxon>Pseudomonadati</taxon>
        <taxon>Pseudomonadota</taxon>
        <taxon>Betaproteobacteria</taxon>
        <taxon>Burkholderiales</taxon>
        <taxon>Sphaerotilaceae</taxon>
        <taxon>Leptothrix</taxon>
    </lineage>
</organism>